<sequence>MTDAPVSRCGYVAIVGRPNVGKSTLLNHILGQKLAITSRKPQTTRHNMLGIKTEGEIQAVYVDTPGLHKHNDKALNRYMNRSASSALKDVDVVVFVVDRTRWTDEDQLVLEKVQHVKCPILLAVNKADRLEDKSELLPHLNWLAEQLPQAEIVPISALQGQNLDTLEKLVGERLPESEHFYPEDQITDRSSRFLAAELIREKIMRQLGAELPYQITVEIEEFKQDGPILHIHGLILVERDGQKKIIIGDKGERIKRIGQDARKDMETMFDSKVMLNLWVKVKGGWSDDERALRSLGYLD</sequence>
<keyword id="KW-0997">Cell inner membrane</keyword>
<keyword id="KW-1003">Cell membrane</keyword>
<keyword id="KW-0963">Cytoplasm</keyword>
<keyword id="KW-0342">GTP-binding</keyword>
<keyword id="KW-0472">Membrane</keyword>
<keyword id="KW-0547">Nucleotide-binding</keyword>
<keyword id="KW-0690">Ribosome biogenesis</keyword>
<keyword id="KW-0694">RNA-binding</keyword>
<keyword id="KW-0699">rRNA-binding</keyword>
<proteinExistence type="inferred from homology"/>
<accession>A4XSC5</accession>
<protein>
    <recommendedName>
        <fullName evidence="1">GTPase Era</fullName>
    </recommendedName>
</protein>
<gene>
    <name evidence="1" type="primary">era</name>
    <name type="ordered locus">Pmen_1476</name>
</gene>
<evidence type="ECO:0000255" key="1">
    <source>
        <dbReference type="HAMAP-Rule" id="MF_00367"/>
    </source>
</evidence>
<evidence type="ECO:0000255" key="2">
    <source>
        <dbReference type="PROSITE-ProRule" id="PRU01050"/>
    </source>
</evidence>
<comment type="function">
    <text evidence="1">An essential GTPase that binds both GDP and GTP, with rapid nucleotide exchange. Plays a role in 16S rRNA processing and 30S ribosomal subunit biogenesis and possibly also in cell cycle regulation and energy metabolism.</text>
</comment>
<comment type="subunit">
    <text evidence="1">Monomer.</text>
</comment>
<comment type="subcellular location">
    <subcellularLocation>
        <location>Cytoplasm</location>
    </subcellularLocation>
    <subcellularLocation>
        <location evidence="1">Cell inner membrane</location>
        <topology evidence="1">Peripheral membrane protein</topology>
    </subcellularLocation>
</comment>
<comment type="similarity">
    <text evidence="1 2">Belongs to the TRAFAC class TrmE-Era-EngA-EngB-Septin-like GTPase superfamily. Era GTPase family.</text>
</comment>
<feature type="chain" id="PRO_1000079722" description="GTPase Era">
    <location>
        <begin position="1"/>
        <end position="299"/>
    </location>
</feature>
<feature type="domain" description="Era-type G" evidence="2">
    <location>
        <begin position="8"/>
        <end position="176"/>
    </location>
</feature>
<feature type="domain" description="KH type-2" evidence="1">
    <location>
        <begin position="199"/>
        <end position="283"/>
    </location>
</feature>
<feature type="region of interest" description="G1" evidence="2">
    <location>
        <begin position="16"/>
        <end position="23"/>
    </location>
</feature>
<feature type="region of interest" description="G2" evidence="2">
    <location>
        <begin position="42"/>
        <end position="46"/>
    </location>
</feature>
<feature type="region of interest" description="G3" evidence="2">
    <location>
        <begin position="63"/>
        <end position="66"/>
    </location>
</feature>
<feature type="region of interest" description="G4" evidence="2">
    <location>
        <begin position="125"/>
        <end position="128"/>
    </location>
</feature>
<feature type="region of interest" description="G5" evidence="2">
    <location>
        <begin position="155"/>
        <end position="157"/>
    </location>
</feature>
<feature type="binding site" evidence="1">
    <location>
        <begin position="16"/>
        <end position="23"/>
    </location>
    <ligand>
        <name>GTP</name>
        <dbReference type="ChEBI" id="CHEBI:37565"/>
    </ligand>
</feature>
<feature type="binding site" evidence="1">
    <location>
        <begin position="63"/>
        <end position="67"/>
    </location>
    <ligand>
        <name>GTP</name>
        <dbReference type="ChEBI" id="CHEBI:37565"/>
    </ligand>
</feature>
<feature type="binding site" evidence="1">
    <location>
        <begin position="125"/>
        <end position="128"/>
    </location>
    <ligand>
        <name>GTP</name>
        <dbReference type="ChEBI" id="CHEBI:37565"/>
    </ligand>
</feature>
<name>ERA_ECTM1</name>
<organism>
    <name type="scientific">Ectopseudomonas mendocina (strain ymp)</name>
    <name type="common">Pseudomonas mendocina</name>
    <dbReference type="NCBI Taxonomy" id="399739"/>
    <lineage>
        <taxon>Bacteria</taxon>
        <taxon>Pseudomonadati</taxon>
        <taxon>Pseudomonadota</taxon>
        <taxon>Gammaproteobacteria</taxon>
        <taxon>Pseudomonadales</taxon>
        <taxon>Pseudomonadaceae</taxon>
        <taxon>Ectopseudomonas</taxon>
    </lineage>
</organism>
<reference key="1">
    <citation type="submission" date="2007-04" db="EMBL/GenBank/DDBJ databases">
        <title>Complete sequence of Pseudomonas mendocina ymp.</title>
        <authorList>
            <consortium name="US DOE Joint Genome Institute"/>
            <person name="Copeland A."/>
            <person name="Lucas S."/>
            <person name="Lapidus A."/>
            <person name="Barry K."/>
            <person name="Glavina del Rio T."/>
            <person name="Dalin E."/>
            <person name="Tice H."/>
            <person name="Pitluck S."/>
            <person name="Kiss H."/>
            <person name="Brettin T."/>
            <person name="Detter J.C."/>
            <person name="Bruce D."/>
            <person name="Han C."/>
            <person name="Schmutz J."/>
            <person name="Larimer F."/>
            <person name="Land M."/>
            <person name="Hauser L."/>
            <person name="Kyrpides N."/>
            <person name="Mikhailova N."/>
            <person name="Hersman L."/>
            <person name="Dubois J."/>
            <person name="Maurice P."/>
            <person name="Richardson P."/>
        </authorList>
    </citation>
    <scope>NUCLEOTIDE SEQUENCE [LARGE SCALE GENOMIC DNA]</scope>
    <source>
        <strain>ymp</strain>
    </source>
</reference>
<dbReference type="EMBL" id="CP000680">
    <property type="protein sequence ID" value="ABP84241.1"/>
    <property type="molecule type" value="Genomic_DNA"/>
</dbReference>
<dbReference type="SMR" id="A4XSC5"/>
<dbReference type="STRING" id="399739.Pmen_1476"/>
<dbReference type="KEGG" id="pmy:Pmen_1476"/>
<dbReference type="PATRIC" id="fig|399739.8.peg.1498"/>
<dbReference type="eggNOG" id="COG1159">
    <property type="taxonomic scope" value="Bacteria"/>
</dbReference>
<dbReference type="HOGENOM" id="CLU_038009_1_2_6"/>
<dbReference type="OrthoDB" id="9805918at2"/>
<dbReference type="GO" id="GO:0005829">
    <property type="term" value="C:cytosol"/>
    <property type="evidence" value="ECO:0007669"/>
    <property type="project" value="TreeGrafter"/>
</dbReference>
<dbReference type="GO" id="GO:0005886">
    <property type="term" value="C:plasma membrane"/>
    <property type="evidence" value="ECO:0007669"/>
    <property type="project" value="UniProtKB-SubCell"/>
</dbReference>
<dbReference type="GO" id="GO:0005525">
    <property type="term" value="F:GTP binding"/>
    <property type="evidence" value="ECO:0007669"/>
    <property type="project" value="UniProtKB-UniRule"/>
</dbReference>
<dbReference type="GO" id="GO:0003924">
    <property type="term" value="F:GTPase activity"/>
    <property type="evidence" value="ECO:0007669"/>
    <property type="project" value="UniProtKB-UniRule"/>
</dbReference>
<dbReference type="GO" id="GO:0043024">
    <property type="term" value="F:ribosomal small subunit binding"/>
    <property type="evidence" value="ECO:0007669"/>
    <property type="project" value="TreeGrafter"/>
</dbReference>
<dbReference type="GO" id="GO:0070181">
    <property type="term" value="F:small ribosomal subunit rRNA binding"/>
    <property type="evidence" value="ECO:0007669"/>
    <property type="project" value="UniProtKB-UniRule"/>
</dbReference>
<dbReference type="GO" id="GO:0000028">
    <property type="term" value="P:ribosomal small subunit assembly"/>
    <property type="evidence" value="ECO:0007669"/>
    <property type="project" value="TreeGrafter"/>
</dbReference>
<dbReference type="CDD" id="cd04163">
    <property type="entry name" value="Era"/>
    <property type="match status" value="1"/>
</dbReference>
<dbReference type="CDD" id="cd22534">
    <property type="entry name" value="KH-II_Era"/>
    <property type="match status" value="1"/>
</dbReference>
<dbReference type="FunFam" id="3.30.300.20:FF:000003">
    <property type="entry name" value="GTPase Era"/>
    <property type="match status" value="1"/>
</dbReference>
<dbReference type="FunFam" id="3.40.50.300:FF:000094">
    <property type="entry name" value="GTPase Era"/>
    <property type="match status" value="1"/>
</dbReference>
<dbReference type="Gene3D" id="3.30.300.20">
    <property type="match status" value="1"/>
</dbReference>
<dbReference type="Gene3D" id="3.40.50.300">
    <property type="entry name" value="P-loop containing nucleotide triphosphate hydrolases"/>
    <property type="match status" value="1"/>
</dbReference>
<dbReference type="HAMAP" id="MF_00367">
    <property type="entry name" value="GTPase_Era"/>
    <property type="match status" value="1"/>
</dbReference>
<dbReference type="InterPro" id="IPR030388">
    <property type="entry name" value="G_ERA_dom"/>
</dbReference>
<dbReference type="InterPro" id="IPR006073">
    <property type="entry name" value="GTP-bd"/>
</dbReference>
<dbReference type="InterPro" id="IPR005662">
    <property type="entry name" value="GTPase_Era-like"/>
</dbReference>
<dbReference type="InterPro" id="IPR015946">
    <property type="entry name" value="KH_dom-like_a/b"/>
</dbReference>
<dbReference type="InterPro" id="IPR004044">
    <property type="entry name" value="KH_dom_type_2"/>
</dbReference>
<dbReference type="InterPro" id="IPR009019">
    <property type="entry name" value="KH_sf_prok-type"/>
</dbReference>
<dbReference type="InterPro" id="IPR027417">
    <property type="entry name" value="P-loop_NTPase"/>
</dbReference>
<dbReference type="InterPro" id="IPR005225">
    <property type="entry name" value="Small_GTP-bd"/>
</dbReference>
<dbReference type="NCBIfam" id="TIGR00436">
    <property type="entry name" value="era"/>
    <property type="match status" value="1"/>
</dbReference>
<dbReference type="NCBIfam" id="NF000908">
    <property type="entry name" value="PRK00089.1"/>
    <property type="match status" value="1"/>
</dbReference>
<dbReference type="NCBIfam" id="TIGR00231">
    <property type="entry name" value="small_GTP"/>
    <property type="match status" value="1"/>
</dbReference>
<dbReference type="PANTHER" id="PTHR42698">
    <property type="entry name" value="GTPASE ERA"/>
    <property type="match status" value="1"/>
</dbReference>
<dbReference type="PANTHER" id="PTHR42698:SF1">
    <property type="entry name" value="GTPASE ERA, MITOCHONDRIAL"/>
    <property type="match status" value="1"/>
</dbReference>
<dbReference type="Pfam" id="PF07650">
    <property type="entry name" value="KH_2"/>
    <property type="match status" value="1"/>
</dbReference>
<dbReference type="Pfam" id="PF01926">
    <property type="entry name" value="MMR_HSR1"/>
    <property type="match status" value="1"/>
</dbReference>
<dbReference type="PRINTS" id="PR00326">
    <property type="entry name" value="GTP1OBG"/>
</dbReference>
<dbReference type="SUPFAM" id="SSF52540">
    <property type="entry name" value="P-loop containing nucleoside triphosphate hydrolases"/>
    <property type="match status" value="1"/>
</dbReference>
<dbReference type="SUPFAM" id="SSF54814">
    <property type="entry name" value="Prokaryotic type KH domain (KH-domain type II)"/>
    <property type="match status" value="1"/>
</dbReference>
<dbReference type="PROSITE" id="PS51713">
    <property type="entry name" value="G_ERA"/>
    <property type="match status" value="1"/>
</dbReference>
<dbReference type="PROSITE" id="PS50823">
    <property type="entry name" value="KH_TYPE_2"/>
    <property type="match status" value="1"/>
</dbReference>